<feature type="chain" id="PRO_1000114281" description="Probable septum site-determining protein MinC">
    <location>
        <begin position="1"/>
        <end position="290"/>
    </location>
</feature>
<accession>B0TBY2</accession>
<dbReference type="EMBL" id="CP000930">
    <property type="protein sequence ID" value="ABZ85255.1"/>
    <property type="molecule type" value="Genomic_DNA"/>
</dbReference>
<dbReference type="SMR" id="B0TBY2"/>
<dbReference type="STRING" id="498761.HM1_2726"/>
<dbReference type="KEGG" id="hmo:HM1_2726"/>
<dbReference type="eggNOG" id="COG0850">
    <property type="taxonomic scope" value="Bacteria"/>
</dbReference>
<dbReference type="HOGENOM" id="CLU_048711_2_0_9"/>
<dbReference type="Proteomes" id="UP000008550">
    <property type="component" value="Chromosome"/>
</dbReference>
<dbReference type="GO" id="GO:0000902">
    <property type="term" value="P:cell morphogenesis"/>
    <property type="evidence" value="ECO:0007669"/>
    <property type="project" value="InterPro"/>
</dbReference>
<dbReference type="GO" id="GO:0000917">
    <property type="term" value="P:division septum assembly"/>
    <property type="evidence" value="ECO:0007669"/>
    <property type="project" value="UniProtKB-KW"/>
</dbReference>
<dbReference type="GO" id="GO:1901891">
    <property type="term" value="P:regulation of cell septum assembly"/>
    <property type="evidence" value="ECO:0007669"/>
    <property type="project" value="InterPro"/>
</dbReference>
<dbReference type="Gene3D" id="2.160.20.70">
    <property type="match status" value="1"/>
</dbReference>
<dbReference type="Gene3D" id="3.30.160.540">
    <property type="match status" value="1"/>
</dbReference>
<dbReference type="HAMAP" id="MF_00267">
    <property type="entry name" value="MinC"/>
    <property type="match status" value="1"/>
</dbReference>
<dbReference type="InterPro" id="IPR016098">
    <property type="entry name" value="CAP/MinC_C"/>
</dbReference>
<dbReference type="InterPro" id="IPR013033">
    <property type="entry name" value="MinC"/>
</dbReference>
<dbReference type="InterPro" id="IPR036145">
    <property type="entry name" value="MinC_C_sf"/>
</dbReference>
<dbReference type="InterPro" id="IPR055219">
    <property type="entry name" value="MinC_N_1"/>
</dbReference>
<dbReference type="InterPro" id="IPR005526">
    <property type="entry name" value="Septum_form_inhib_MinC_C"/>
</dbReference>
<dbReference type="NCBIfam" id="TIGR01222">
    <property type="entry name" value="minC"/>
    <property type="match status" value="1"/>
</dbReference>
<dbReference type="PANTHER" id="PTHR34108">
    <property type="entry name" value="SEPTUM SITE-DETERMINING PROTEIN MINC"/>
    <property type="match status" value="1"/>
</dbReference>
<dbReference type="PANTHER" id="PTHR34108:SF1">
    <property type="entry name" value="SEPTUM SITE-DETERMINING PROTEIN MINC"/>
    <property type="match status" value="1"/>
</dbReference>
<dbReference type="Pfam" id="PF03775">
    <property type="entry name" value="MinC_C"/>
    <property type="match status" value="1"/>
</dbReference>
<dbReference type="Pfam" id="PF22642">
    <property type="entry name" value="MinC_N_1"/>
    <property type="match status" value="1"/>
</dbReference>
<dbReference type="SUPFAM" id="SSF63848">
    <property type="entry name" value="Cell-division inhibitor MinC, C-terminal domain"/>
    <property type="match status" value="1"/>
</dbReference>
<comment type="function">
    <text evidence="1">Cell division inhibitor that blocks the formation of polar Z ring septums. Rapidly oscillates between the poles of the cell to destabilize FtsZ filaments that have formed before they mature into polar Z rings. Prevents FtsZ polymerization.</text>
</comment>
<comment type="subunit">
    <text evidence="1">Interacts with MinD and FtsZ.</text>
</comment>
<comment type="similarity">
    <text evidence="1">Belongs to the MinC family.</text>
</comment>
<proteinExistence type="inferred from homology"/>
<protein>
    <recommendedName>
        <fullName evidence="1">Probable septum site-determining protein MinC</fullName>
    </recommendedName>
</protein>
<gene>
    <name evidence="1" type="primary">minC</name>
    <name type="ordered locus">Helmi_26300</name>
    <name type="ORF">HM1_2726</name>
</gene>
<evidence type="ECO:0000255" key="1">
    <source>
        <dbReference type="HAMAP-Rule" id="MF_00267"/>
    </source>
</evidence>
<name>MINC_HELMI</name>
<keyword id="KW-0131">Cell cycle</keyword>
<keyword id="KW-0132">Cell division</keyword>
<keyword id="KW-1185">Reference proteome</keyword>
<keyword id="KW-0717">Septation</keyword>
<organism>
    <name type="scientific">Heliobacterium modesticaldum (strain ATCC 51547 / Ice1)</name>
    <dbReference type="NCBI Taxonomy" id="498761"/>
    <lineage>
        <taxon>Bacteria</taxon>
        <taxon>Bacillati</taxon>
        <taxon>Bacillota</taxon>
        <taxon>Clostridia</taxon>
        <taxon>Eubacteriales</taxon>
        <taxon>Heliobacteriaceae</taxon>
        <taxon>Heliomicrobium</taxon>
    </lineage>
</organism>
<sequence length="290" mass="31678">MGKADIVIKGSKDGLTFFLDSQCDFSELAAAIETKLASADFFLVGAHVTVDVGTRQLHPDQIERLQTLFPSYGLILRGINSWADPVGQHDEEERVVLKGNRERIYQIANHLYESTERADGAARNYDYRDESASSFSPVGTAPDYAEATTEPADCFGGSPSDMQTAILTQGGDERTLLIQRTLRSGQTVRYPGHVVILGDVNPGAEVVAGGNIIVMGVFRGVAHAGAMGSDEAVVTAYRLRPTQLRIANHITRPPDEEEEGPEHPEIARIRDGMVTIERYHYGTKSYGKDV</sequence>
<reference key="1">
    <citation type="journal article" date="2008" name="J. Bacteriol.">
        <title>The genome of Heliobacterium modesticaldum, a phototrophic representative of the Firmicutes containing the simplest photosynthetic apparatus.</title>
        <authorList>
            <person name="Sattley W.M."/>
            <person name="Madigan M.T."/>
            <person name="Swingley W.D."/>
            <person name="Cheung P.C."/>
            <person name="Clocksin K.M."/>
            <person name="Conrad A.L."/>
            <person name="Dejesa L.C."/>
            <person name="Honchak B.M."/>
            <person name="Jung D.O."/>
            <person name="Karbach L.E."/>
            <person name="Kurdoglu A."/>
            <person name="Lahiri S."/>
            <person name="Mastrian S.D."/>
            <person name="Page L.E."/>
            <person name="Taylor H.L."/>
            <person name="Wang Z.T."/>
            <person name="Raymond J."/>
            <person name="Chen M."/>
            <person name="Blankenship R.E."/>
            <person name="Touchman J.W."/>
        </authorList>
    </citation>
    <scope>NUCLEOTIDE SEQUENCE [LARGE SCALE GENOMIC DNA]</scope>
    <source>
        <strain>ATCC 51547 / Ice1</strain>
    </source>
</reference>